<organism>
    <name type="scientific">Xenopus tropicalis</name>
    <name type="common">Western clawed frog</name>
    <name type="synonym">Silurana tropicalis</name>
    <dbReference type="NCBI Taxonomy" id="8364"/>
    <lineage>
        <taxon>Eukaryota</taxon>
        <taxon>Metazoa</taxon>
        <taxon>Chordata</taxon>
        <taxon>Craniata</taxon>
        <taxon>Vertebrata</taxon>
        <taxon>Euteleostomi</taxon>
        <taxon>Amphibia</taxon>
        <taxon>Batrachia</taxon>
        <taxon>Anura</taxon>
        <taxon>Pipoidea</taxon>
        <taxon>Pipidae</taxon>
        <taxon>Xenopodinae</taxon>
        <taxon>Xenopus</taxon>
        <taxon>Silurana</taxon>
    </lineage>
</organism>
<comment type="function">
    <text evidence="1">Substrate-recognition component of a cullin-5-RING E3 ubiquitin-protein ligase complex (ECS complex, also named CRL5 complex), which mediates the ubiquitination and subsequent proteasomal degradation of target proteins.</text>
</comment>
<comment type="pathway">
    <text evidence="1">Protein modification; protein ubiquitination.</text>
</comment>
<comment type="subunit">
    <text evidence="1">Substrate-recognition component of the ECS(SPSB3) complex, composed of spsb3, cul5, elob, elob and rnf7/rbx2.</text>
</comment>
<comment type="subcellular location">
    <subcellularLocation>
        <location evidence="1">Nucleus</location>
    </subcellularLocation>
</comment>
<comment type="domain">
    <text evidence="1">The SOCS box domain mediates the interaction with the Elongin BC complex, an adapter module in different E3 ubiquitin ligase complexes.</text>
</comment>
<comment type="similarity">
    <text evidence="5">Belongs to the SPSB family.</text>
</comment>
<evidence type="ECO:0000250" key="1">
    <source>
        <dbReference type="UniProtKB" id="Q6PJ21"/>
    </source>
</evidence>
<evidence type="ECO:0000255" key="2">
    <source>
        <dbReference type="PROSITE-ProRule" id="PRU00194"/>
    </source>
</evidence>
<evidence type="ECO:0000255" key="3">
    <source>
        <dbReference type="PROSITE-ProRule" id="PRU00548"/>
    </source>
</evidence>
<evidence type="ECO:0000256" key="4">
    <source>
        <dbReference type="SAM" id="MobiDB-lite"/>
    </source>
</evidence>
<evidence type="ECO:0000305" key="5"/>
<name>SPSB3_XENTR</name>
<proteinExistence type="evidence at transcript level"/>
<keyword id="KW-0539">Nucleus</keyword>
<keyword id="KW-1185">Reference proteome</keyword>
<keyword id="KW-0833">Ubl conjugation pathway</keyword>
<sequence>MARRPRNSRAWRFVLSGVRRDQDARSPTLPAEEEAWGYDSDGQHSNSDSDTDLLHLPPSIPSAVPVTGESYCDCDSQNDPYCSSLHTFHQIKSCQCGEEDNYFDWVWDDCSKSTATVLSCDNRKVSFHMEYSCGTAAIRGNRMLTEGQHFWEIKMTSPVYGTDMMVGIGTSDVNLDKYRHTFCSLLGKDAESWGLSYTGLLQHKGDKSNFSSRFGQGSIIGVHLDTWHGVLTFYKNRKCIGVAATQLRNKKLFPMVCSTAAKSSMKVIRSCCCRTSLQYLCCARLRQLLPDSVDSLEVLPLPPGLKQVLGNKLGWVLQMGSNRSNQHKGDTSATTSCGSDSDSSCTPGQDDCQRKRCRRI</sequence>
<dbReference type="EMBL" id="CR848600">
    <property type="protein sequence ID" value="CAJ83905.1"/>
    <property type="molecule type" value="mRNA"/>
</dbReference>
<dbReference type="RefSeq" id="NP_001017350.1">
    <property type="nucleotide sequence ID" value="NM_001017350.2"/>
</dbReference>
<dbReference type="RefSeq" id="XP_012825936.1">
    <property type="nucleotide sequence ID" value="XM_012970482.3"/>
</dbReference>
<dbReference type="RefSeq" id="XP_012825937.1">
    <property type="nucleotide sequence ID" value="XM_012970483.3"/>
</dbReference>
<dbReference type="RefSeq" id="XP_012825938.1">
    <property type="nucleotide sequence ID" value="XM_012970484.3"/>
</dbReference>
<dbReference type="RefSeq" id="XP_017952622.1">
    <property type="nucleotide sequence ID" value="XM_018097133.1"/>
</dbReference>
<dbReference type="RefSeq" id="XP_031748558.1">
    <property type="nucleotide sequence ID" value="XM_031892698.1"/>
</dbReference>
<dbReference type="SMR" id="Q28DT9"/>
<dbReference type="FunCoup" id="Q28DT9">
    <property type="interactions" value="302"/>
</dbReference>
<dbReference type="STRING" id="8364.ENSXETP00000022514"/>
<dbReference type="PaxDb" id="8364-ENSXETP00000022767"/>
<dbReference type="GeneID" id="550104"/>
<dbReference type="KEGG" id="xtr:550104"/>
<dbReference type="AGR" id="Xenbase:XB-GENE-971062"/>
<dbReference type="CTD" id="90864"/>
<dbReference type="Xenbase" id="XB-GENE-971062">
    <property type="gene designation" value="spsb3"/>
</dbReference>
<dbReference type="eggNOG" id="ENOG502QTS2">
    <property type="taxonomic scope" value="Eukaryota"/>
</dbReference>
<dbReference type="HOGENOM" id="CLU_042284_0_0_1"/>
<dbReference type="InParanoid" id="Q28DT9"/>
<dbReference type="OMA" id="MFHIDYS"/>
<dbReference type="OrthoDB" id="5951542at2759"/>
<dbReference type="PhylomeDB" id="Q28DT9"/>
<dbReference type="TreeFam" id="TF312822"/>
<dbReference type="Reactome" id="R-XTR-8951664">
    <property type="pathway name" value="Neddylation"/>
</dbReference>
<dbReference type="UniPathway" id="UPA00143"/>
<dbReference type="Proteomes" id="UP000008143">
    <property type="component" value="Chromosome 9"/>
</dbReference>
<dbReference type="Bgee" id="ENSXETG00000010355">
    <property type="expression patterns" value="Expressed in testis and 12 other cell types or tissues"/>
</dbReference>
<dbReference type="ExpressionAtlas" id="Q28DT9">
    <property type="expression patterns" value="baseline"/>
</dbReference>
<dbReference type="GO" id="GO:0031466">
    <property type="term" value="C:Cul5-RING ubiquitin ligase complex"/>
    <property type="evidence" value="ECO:0000250"/>
    <property type="project" value="UniProtKB"/>
</dbReference>
<dbReference type="GO" id="GO:0005634">
    <property type="term" value="C:nucleus"/>
    <property type="evidence" value="ECO:0000250"/>
    <property type="project" value="UniProtKB"/>
</dbReference>
<dbReference type="GO" id="GO:1990756">
    <property type="term" value="F:ubiquitin-like ligase-substrate adaptor activity"/>
    <property type="evidence" value="ECO:0000250"/>
    <property type="project" value="UniProtKB"/>
</dbReference>
<dbReference type="GO" id="GO:0160049">
    <property type="term" value="P:negative regulation of cGAS/STING signaling pathway"/>
    <property type="evidence" value="ECO:0000250"/>
    <property type="project" value="UniProtKB"/>
</dbReference>
<dbReference type="GO" id="GO:0010719">
    <property type="term" value="P:negative regulation of epithelial to mesenchymal transition"/>
    <property type="evidence" value="ECO:0000250"/>
    <property type="project" value="UniProtKB"/>
</dbReference>
<dbReference type="GO" id="GO:0043161">
    <property type="term" value="P:proteasome-mediated ubiquitin-dependent protein catabolic process"/>
    <property type="evidence" value="ECO:0000250"/>
    <property type="project" value="UniProtKB"/>
</dbReference>
<dbReference type="GO" id="GO:0070936">
    <property type="term" value="P:protein K48-linked ubiquitination"/>
    <property type="evidence" value="ECO:0000250"/>
    <property type="project" value="UniProtKB"/>
</dbReference>
<dbReference type="CDD" id="cd12876">
    <property type="entry name" value="SPRY_SOCS3"/>
    <property type="match status" value="1"/>
</dbReference>
<dbReference type="FunFam" id="2.60.120.920:FF:000018">
    <property type="entry name" value="SPRY domain-containing SOCS box protein 3 isoform X2"/>
    <property type="match status" value="1"/>
</dbReference>
<dbReference type="Gene3D" id="2.60.120.920">
    <property type="match status" value="1"/>
</dbReference>
<dbReference type="InterPro" id="IPR001870">
    <property type="entry name" value="B30.2/SPRY"/>
</dbReference>
<dbReference type="InterPro" id="IPR043136">
    <property type="entry name" value="B30.2/SPRY_sf"/>
</dbReference>
<dbReference type="InterPro" id="IPR013320">
    <property type="entry name" value="ConA-like_dom_sf"/>
</dbReference>
<dbReference type="InterPro" id="IPR050672">
    <property type="entry name" value="FBXO45-Fsn/SPSB_families"/>
</dbReference>
<dbReference type="InterPro" id="IPR001496">
    <property type="entry name" value="SOCS_box"/>
</dbReference>
<dbReference type="InterPro" id="IPR003877">
    <property type="entry name" value="SPRY_dom"/>
</dbReference>
<dbReference type="InterPro" id="IPR035754">
    <property type="entry name" value="SPRY_SPSB3"/>
</dbReference>
<dbReference type="PANTHER" id="PTHR12245">
    <property type="entry name" value="SPRY DOMAIN CONTAINING SOCS BOX PROTEIN"/>
    <property type="match status" value="1"/>
</dbReference>
<dbReference type="PANTHER" id="PTHR12245:SF5">
    <property type="entry name" value="SPRY DOMAIN-CONTAINING SOCS BOX PROTEIN 3"/>
    <property type="match status" value="1"/>
</dbReference>
<dbReference type="Pfam" id="PF00622">
    <property type="entry name" value="SPRY"/>
    <property type="match status" value="1"/>
</dbReference>
<dbReference type="SMART" id="SM00449">
    <property type="entry name" value="SPRY"/>
    <property type="match status" value="1"/>
</dbReference>
<dbReference type="SUPFAM" id="SSF49899">
    <property type="entry name" value="Concanavalin A-like lectins/glucanases"/>
    <property type="match status" value="1"/>
</dbReference>
<dbReference type="PROSITE" id="PS50188">
    <property type="entry name" value="B302_SPRY"/>
    <property type="match status" value="1"/>
</dbReference>
<dbReference type="PROSITE" id="PS50225">
    <property type="entry name" value="SOCS"/>
    <property type="match status" value="1"/>
</dbReference>
<protein>
    <recommendedName>
        <fullName>SPRY domain-containing SOCS box protein 3</fullName>
        <shortName>SSB-3</shortName>
    </recommendedName>
</protein>
<feature type="chain" id="PRO_0000278781" description="SPRY domain-containing SOCS box protein 3">
    <location>
        <begin position="1"/>
        <end position="360"/>
    </location>
</feature>
<feature type="domain" description="B30.2/SPRY" evidence="3">
    <location>
        <begin position="85"/>
        <end position="274"/>
    </location>
</feature>
<feature type="domain" description="SOCS box" evidence="2">
    <location>
        <begin position="264"/>
        <end position="315"/>
    </location>
</feature>
<feature type="region of interest" description="Disordered" evidence="4">
    <location>
        <begin position="20"/>
        <end position="55"/>
    </location>
</feature>
<feature type="region of interest" description="Disordered" evidence="4">
    <location>
        <begin position="323"/>
        <end position="350"/>
    </location>
</feature>
<feature type="compositionally biased region" description="Low complexity" evidence="4">
    <location>
        <begin position="331"/>
        <end position="346"/>
    </location>
</feature>
<gene>
    <name type="primary">spsb3</name>
    <name type="ORF">TGas007f05.1</name>
</gene>
<accession>Q28DT9</accession>
<reference key="1">
    <citation type="submission" date="2006-10" db="EMBL/GenBank/DDBJ databases">
        <authorList>
            <consortium name="Sanger Xenopus tropicalis EST/cDNA project"/>
        </authorList>
    </citation>
    <scope>NUCLEOTIDE SEQUENCE [LARGE SCALE MRNA]</scope>
    <source>
        <tissue>Gastrula</tissue>
    </source>
</reference>